<gene>
    <name evidence="1" type="primary">rplM</name>
    <name type="ordered locus">Smal_3711</name>
</gene>
<organism>
    <name type="scientific">Stenotrophomonas maltophilia (strain R551-3)</name>
    <dbReference type="NCBI Taxonomy" id="391008"/>
    <lineage>
        <taxon>Bacteria</taxon>
        <taxon>Pseudomonadati</taxon>
        <taxon>Pseudomonadota</taxon>
        <taxon>Gammaproteobacteria</taxon>
        <taxon>Lysobacterales</taxon>
        <taxon>Lysobacteraceae</taxon>
        <taxon>Stenotrophomonas</taxon>
        <taxon>Stenotrophomonas maltophilia group</taxon>
    </lineage>
</organism>
<comment type="function">
    <text evidence="1">This protein is one of the early assembly proteins of the 50S ribosomal subunit, although it is not seen to bind rRNA by itself. It is important during the early stages of 50S assembly.</text>
</comment>
<comment type="subunit">
    <text evidence="1">Part of the 50S ribosomal subunit.</text>
</comment>
<comment type="similarity">
    <text evidence="1">Belongs to the universal ribosomal protein uL13 family.</text>
</comment>
<protein>
    <recommendedName>
        <fullName evidence="1">Large ribosomal subunit protein uL13</fullName>
    </recommendedName>
    <alternativeName>
        <fullName evidence="2">50S ribosomal protein L13</fullName>
    </alternativeName>
</protein>
<accession>B4SLE1</accession>
<name>RL13_STRM5</name>
<sequence length="142" mass="16157">MSTFTAKNETVQRDWYLVDAEGKTLGRLCTELARRLRGKHKPVYTPHVDTGDYLVVINAEKIVVTGKKLQDKMYHRFTGYIGNLKTESLAQALERHPERVIETAVKGMLPKGPLGRQMYRKLKVYAGTEHPHAAQQPQVLDI</sequence>
<feature type="chain" id="PRO_1000144183" description="Large ribosomal subunit protein uL13">
    <location>
        <begin position="1"/>
        <end position="142"/>
    </location>
</feature>
<evidence type="ECO:0000255" key="1">
    <source>
        <dbReference type="HAMAP-Rule" id="MF_01366"/>
    </source>
</evidence>
<evidence type="ECO:0000305" key="2"/>
<keyword id="KW-0687">Ribonucleoprotein</keyword>
<keyword id="KW-0689">Ribosomal protein</keyword>
<dbReference type="EMBL" id="CP001111">
    <property type="protein sequence ID" value="ACF53410.1"/>
    <property type="molecule type" value="Genomic_DNA"/>
</dbReference>
<dbReference type="RefSeq" id="WP_006398837.1">
    <property type="nucleotide sequence ID" value="NC_011071.1"/>
</dbReference>
<dbReference type="SMR" id="B4SLE1"/>
<dbReference type="STRING" id="391008.Smal_3711"/>
<dbReference type="KEGG" id="smt:Smal_3711"/>
<dbReference type="eggNOG" id="COG0102">
    <property type="taxonomic scope" value="Bacteria"/>
</dbReference>
<dbReference type="HOGENOM" id="CLU_082184_2_2_6"/>
<dbReference type="OrthoDB" id="9801330at2"/>
<dbReference type="Proteomes" id="UP000001867">
    <property type="component" value="Chromosome"/>
</dbReference>
<dbReference type="GO" id="GO:0022625">
    <property type="term" value="C:cytosolic large ribosomal subunit"/>
    <property type="evidence" value="ECO:0007669"/>
    <property type="project" value="TreeGrafter"/>
</dbReference>
<dbReference type="GO" id="GO:0003729">
    <property type="term" value="F:mRNA binding"/>
    <property type="evidence" value="ECO:0007669"/>
    <property type="project" value="TreeGrafter"/>
</dbReference>
<dbReference type="GO" id="GO:0003735">
    <property type="term" value="F:structural constituent of ribosome"/>
    <property type="evidence" value="ECO:0007669"/>
    <property type="project" value="InterPro"/>
</dbReference>
<dbReference type="GO" id="GO:0017148">
    <property type="term" value="P:negative regulation of translation"/>
    <property type="evidence" value="ECO:0007669"/>
    <property type="project" value="TreeGrafter"/>
</dbReference>
<dbReference type="GO" id="GO:0006412">
    <property type="term" value="P:translation"/>
    <property type="evidence" value="ECO:0007669"/>
    <property type="project" value="UniProtKB-UniRule"/>
</dbReference>
<dbReference type="CDD" id="cd00392">
    <property type="entry name" value="Ribosomal_L13"/>
    <property type="match status" value="1"/>
</dbReference>
<dbReference type="FunFam" id="3.90.1180.10:FF:000001">
    <property type="entry name" value="50S ribosomal protein L13"/>
    <property type="match status" value="1"/>
</dbReference>
<dbReference type="Gene3D" id="3.90.1180.10">
    <property type="entry name" value="Ribosomal protein L13"/>
    <property type="match status" value="1"/>
</dbReference>
<dbReference type="HAMAP" id="MF_01366">
    <property type="entry name" value="Ribosomal_uL13"/>
    <property type="match status" value="1"/>
</dbReference>
<dbReference type="InterPro" id="IPR005822">
    <property type="entry name" value="Ribosomal_uL13"/>
</dbReference>
<dbReference type="InterPro" id="IPR005823">
    <property type="entry name" value="Ribosomal_uL13_bac-type"/>
</dbReference>
<dbReference type="InterPro" id="IPR023563">
    <property type="entry name" value="Ribosomal_uL13_CS"/>
</dbReference>
<dbReference type="InterPro" id="IPR036899">
    <property type="entry name" value="Ribosomal_uL13_sf"/>
</dbReference>
<dbReference type="NCBIfam" id="TIGR01066">
    <property type="entry name" value="rplM_bact"/>
    <property type="match status" value="1"/>
</dbReference>
<dbReference type="PANTHER" id="PTHR11545:SF2">
    <property type="entry name" value="LARGE RIBOSOMAL SUBUNIT PROTEIN UL13M"/>
    <property type="match status" value="1"/>
</dbReference>
<dbReference type="PANTHER" id="PTHR11545">
    <property type="entry name" value="RIBOSOMAL PROTEIN L13"/>
    <property type="match status" value="1"/>
</dbReference>
<dbReference type="Pfam" id="PF00572">
    <property type="entry name" value="Ribosomal_L13"/>
    <property type="match status" value="1"/>
</dbReference>
<dbReference type="PIRSF" id="PIRSF002181">
    <property type="entry name" value="Ribosomal_L13"/>
    <property type="match status" value="1"/>
</dbReference>
<dbReference type="SUPFAM" id="SSF52161">
    <property type="entry name" value="Ribosomal protein L13"/>
    <property type="match status" value="1"/>
</dbReference>
<dbReference type="PROSITE" id="PS00783">
    <property type="entry name" value="RIBOSOMAL_L13"/>
    <property type="match status" value="1"/>
</dbReference>
<reference key="1">
    <citation type="submission" date="2008-06" db="EMBL/GenBank/DDBJ databases">
        <title>Complete sequence of Stenotrophomonas maltophilia R551-3.</title>
        <authorList>
            <consortium name="US DOE Joint Genome Institute"/>
            <person name="Lucas S."/>
            <person name="Copeland A."/>
            <person name="Lapidus A."/>
            <person name="Glavina del Rio T."/>
            <person name="Dalin E."/>
            <person name="Tice H."/>
            <person name="Pitluck S."/>
            <person name="Chain P."/>
            <person name="Malfatti S."/>
            <person name="Shin M."/>
            <person name="Vergez L."/>
            <person name="Lang D."/>
            <person name="Schmutz J."/>
            <person name="Larimer F."/>
            <person name="Land M."/>
            <person name="Hauser L."/>
            <person name="Kyrpides N."/>
            <person name="Mikhailova N."/>
            <person name="Taghavi S."/>
            <person name="Monchy S."/>
            <person name="Newman L."/>
            <person name="Vangronsveld J."/>
            <person name="van der Lelie D."/>
            <person name="Richardson P."/>
        </authorList>
    </citation>
    <scope>NUCLEOTIDE SEQUENCE [LARGE SCALE GENOMIC DNA]</scope>
    <source>
        <strain>R551-3</strain>
    </source>
</reference>
<proteinExistence type="inferred from homology"/>